<accession>P27611</accession>
<accession>D3FYJ2</accession>
<keyword id="KW-0050">Antiport</keyword>
<keyword id="KW-1003">Cell membrane</keyword>
<keyword id="KW-0406">Ion transport</keyword>
<keyword id="KW-0472">Membrane</keyword>
<keyword id="KW-1185">Reference proteome</keyword>
<keyword id="KW-0915">Sodium</keyword>
<keyword id="KW-0739">Sodium transport</keyword>
<keyword id="KW-0812">Transmembrane</keyword>
<keyword id="KW-1133">Transmembrane helix</keyword>
<keyword id="KW-0813">Transport</keyword>
<comment type="function">
    <text evidence="2 3">Na(+)/H(+) antiporter. Involved in pH homeostasis and sodium extrusion.</text>
</comment>
<comment type="subcellular location">
    <subcellularLocation>
        <location evidence="2">Cell membrane</location>
        <topology evidence="2">Multi-pass membrane protein</topology>
    </subcellularLocation>
</comment>
<comment type="similarity">
    <text evidence="4">Belongs to the NhaC Na(+)/H(+) (TC 2.A.35) antiporter family.</text>
</comment>
<reference key="1">
    <citation type="journal article" date="1991" name="J. Biol. Chem.">
        <title>Molecular cloning and sequencing of a gene from alkaliphilic Bacillus firmus OF4 that functionally complements an Escherichia coli strain carrying a deletion in the nhaA Na+/H+ antiporter gene.</title>
        <authorList>
            <person name="Ivey D.M."/>
            <person name="Guffanti A.A."/>
            <person name="Bossewitch J.S."/>
            <person name="Padan E."/>
            <person name="Krulwich T.A."/>
        </authorList>
    </citation>
    <scope>NUCLEOTIDE SEQUENCE [GENOMIC DNA]</scope>
    <scope>FUNCTION</scope>
    <scope>SUBCELLULAR LOCATION</scope>
    <source>
        <strain>ATCC BAA-2126 / JCM 17055 / OF4</strain>
    </source>
</reference>
<reference key="2">
    <citation type="journal article" date="1997" name="J. Bacteriol.">
        <title>Role of the nhaC-encoded Na+/H+ antiporter of alkaliphilic Bacillus firmus OF4.</title>
        <authorList>
            <person name="Ito M."/>
            <person name="Guffanti A.A."/>
            <person name="Zemsky J."/>
            <person name="Ivey D.M."/>
            <person name="Krulwich T.A."/>
        </authorList>
    </citation>
    <scope>SEQUENCE REVISION</scope>
    <scope>FUNCTION</scope>
    <source>
        <strain>ATCC BAA-2126 / JCM 17055 / OF4</strain>
    </source>
</reference>
<reference key="3">
    <citation type="journal article" date="2011" name="Environ. Microbiol.">
        <title>Genome of alkaliphilic Bacillus pseudofirmus OF4 reveals adaptations that support the ability to grow in an external pH range from 7.5 to 11.4.</title>
        <authorList>
            <person name="Janto B."/>
            <person name="Ahmed A."/>
            <person name="Ito M."/>
            <person name="Liu J."/>
            <person name="Hicks D.B."/>
            <person name="Pagni S."/>
            <person name="Fackelmayer O.J."/>
            <person name="Smith T.A."/>
            <person name="Earl J."/>
            <person name="Elbourne L.D."/>
            <person name="Hassan K."/>
            <person name="Paulsen I.T."/>
            <person name="Kolsto A.B."/>
            <person name="Tourasse N.J."/>
            <person name="Ehrlich G.D."/>
            <person name="Boissy R."/>
            <person name="Ivey D.M."/>
            <person name="Li G."/>
            <person name="Xue Y."/>
            <person name="Ma Y."/>
            <person name="Hu F.Z."/>
            <person name="Krulwich T.A."/>
        </authorList>
    </citation>
    <scope>NUCLEOTIDE SEQUENCE [LARGE SCALE GENOMIC DNA]</scope>
    <source>
        <strain>ATCC BAA-2126 / JCM 17055 / OF4</strain>
    </source>
</reference>
<feature type="chain" id="PRO_0000052415" description="Na(+)/H(+) antiporter NhaC">
    <location>
        <begin position="1"/>
        <end position="462"/>
    </location>
</feature>
<feature type="topological domain" description="Cytoplasmic" evidence="1">
    <location>
        <begin position="1"/>
        <end position="6"/>
    </location>
</feature>
<feature type="transmembrane region" description="Helical; Name=M1" evidence="1">
    <location>
        <begin position="7"/>
        <end position="25"/>
    </location>
</feature>
<feature type="topological domain" description="Extracellular" evidence="1">
    <location>
        <begin position="26"/>
        <end position="31"/>
    </location>
</feature>
<feature type="transmembrane region" description="Helical; Name=M2" evidence="1">
    <location>
        <begin position="32"/>
        <end position="50"/>
    </location>
</feature>
<feature type="topological domain" description="Cytoplasmic" evidence="1">
    <location>
        <begin position="51"/>
        <end position="71"/>
    </location>
</feature>
<feature type="transmembrane region" description="Helical; Name=M3" evidence="1">
    <location>
        <begin position="72"/>
        <end position="91"/>
    </location>
</feature>
<feature type="topological domain" description="Extracellular" evidence="1">
    <location>
        <begin position="92"/>
        <end position="97"/>
    </location>
</feature>
<feature type="transmembrane region" description="Helical; Name=M4" evidence="1">
    <location>
        <begin position="98"/>
        <end position="118"/>
    </location>
</feature>
<feature type="topological domain" description="Cytoplasmic" evidence="1">
    <location>
        <begin position="119"/>
        <end position="125"/>
    </location>
</feature>
<feature type="transmembrane region" description="Helical; Name=M5" evidence="1">
    <location>
        <begin position="126"/>
        <end position="145"/>
    </location>
</feature>
<feature type="topological domain" description="Extracellular" evidence="1">
    <location>
        <begin position="146"/>
        <end position="188"/>
    </location>
</feature>
<feature type="transmembrane region" description="Helical; Name=M6" evidence="1">
    <location>
        <begin position="189"/>
        <end position="208"/>
    </location>
</feature>
<feature type="topological domain" description="Cytoplasmic" evidence="1">
    <location>
        <begin position="209"/>
        <end position="228"/>
    </location>
</feature>
<feature type="transmembrane region" description="Helical; Name=M7" evidence="1">
    <location>
        <begin position="229"/>
        <end position="248"/>
    </location>
</feature>
<feature type="topological domain" description="Extracellular" evidence="1">
    <location>
        <begin position="249"/>
        <end position="250"/>
    </location>
</feature>
<feature type="transmembrane region" description="Helical; Name=M8" evidence="1">
    <location>
        <begin position="251"/>
        <end position="271"/>
    </location>
</feature>
<feature type="topological domain" description="Cytoplasmic" evidence="1">
    <location>
        <begin position="272"/>
        <end position="306"/>
    </location>
</feature>
<feature type="transmembrane region" description="Helical; Name=M9" evidence="1">
    <location>
        <begin position="307"/>
        <end position="326"/>
    </location>
</feature>
<feature type="topological domain" description="Extracellular" evidence="1">
    <location>
        <begin position="327"/>
        <end position="353"/>
    </location>
</feature>
<feature type="transmembrane region" description="Helical; Name=M10" evidence="1">
    <location>
        <begin position="354"/>
        <end position="373"/>
    </location>
</feature>
<feature type="topological domain" description="Cytoplasmic" evidence="1">
    <location>
        <begin position="374"/>
        <end position="401"/>
    </location>
</feature>
<feature type="transmembrane region" description="Helical; Name=M11" evidence="1">
    <location>
        <begin position="402"/>
        <end position="421"/>
    </location>
</feature>
<feature type="topological domain" description="Extracellular" evidence="1">
    <location>
        <begin position="422"/>
        <end position="429"/>
    </location>
</feature>
<feature type="transmembrane region" description="Helical; Name=M12" evidence="1">
    <location>
        <begin position="430"/>
        <end position="450"/>
    </location>
</feature>
<feature type="topological domain" description="Cytoplasmic" evidence="1">
    <location>
        <begin position="451"/>
        <end position="462"/>
    </location>
</feature>
<feature type="sequence conflict" description="In Ref. 1; AAC45432." evidence="4" ref="1">
    <original>T</original>
    <variation>A</variation>
    <location>
        <position position="23"/>
    </location>
</feature>
<feature type="sequence conflict" description="In Ref. 1; AAC45432." evidence="4" ref="1">
    <original>A</original>
    <variation>V</variation>
    <location>
        <position position="278"/>
    </location>
</feature>
<feature type="sequence conflict" description="In Ref. 1; AAC45432." evidence="4" ref="1">
    <original>LTRKLSSRGHLIAATA</original>
    <variation>ANKKIIFTWTFDCSDS</variation>
    <location>
        <begin position="339"/>
        <end position="354"/>
    </location>
</feature>
<sequence length="462" mass="49362">MEKKATVGFTLLLLGVMMAIIITSMFVLKVEPHIPLVVCLLIAAVFGRYLRVGWNDLESAMIDGLKIGIKPIFILALVGIVIAVWMMSGTVPTLLFYGLSIISPEWFAVSTLLICMIVSSFTGSSFTTVGTIGVAMMGIGTALGIDPAIAAGAVVCGACFGDKMSPLSDTTNFAPGIVGVDLFDHIRHLLWTTVPSFVITVILFLMIGRSQATSTTQDIQAMLTALDSQFTLSVLTLLSPLLVVILAMRRFPTIPVLVVGILTGIITAAFVQGNADVARWFTIIQNGFSMETGNEVIDGIVNRGGLQSMMWSISLVMIALTLGGVIQRIGVIDTLLQSLTRKLSSRGHLIAATATSSIGVNVVTGEQYLSILLPGKTFESFYTKLNVAKKNLSRTLEDAGTLVNPLIPWGVSGAFFASTLGVDVIDYLPFAFFLFLSPFMTILFGYLGIGVGKEQSLANKRG</sequence>
<dbReference type="EMBL" id="U61539">
    <property type="protein sequence ID" value="AAC45432.1"/>
    <property type="molecule type" value="Genomic_DNA"/>
</dbReference>
<dbReference type="EMBL" id="CP001878">
    <property type="protein sequence ID" value="ADC50844.1"/>
    <property type="molecule type" value="Genomic_DNA"/>
</dbReference>
<dbReference type="PIR" id="A41594">
    <property type="entry name" value="A41594"/>
</dbReference>
<dbReference type="RefSeq" id="WP_012958206.1">
    <property type="nucleotide sequence ID" value="NC_013791.2"/>
</dbReference>
<dbReference type="SMR" id="P27611"/>
<dbReference type="STRING" id="398511.BpOF4_13965"/>
<dbReference type="TCDB" id="2.A.35.1.1">
    <property type="family name" value="the nhac na(+):h(+) antiporter (nhac) family"/>
</dbReference>
<dbReference type="KEGG" id="bpf:BpOF4_13965"/>
<dbReference type="eggNOG" id="COG1757">
    <property type="taxonomic scope" value="Bacteria"/>
</dbReference>
<dbReference type="HOGENOM" id="CLU_033405_1_0_9"/>
<dbReference type="Proteomes" id="UP000001544">
    <property type="component" value="Chromosome"/>
</dbReference>
<dbReference type="GO" id="GO:0005886">
    <property type="term" value="C:plasma membrane"/>
    <property type="evidence" value="ECO:0007669"/>
    <property type="project" value="UniProtKB-SubCell"/>
</dbReference>
<dbReference type="GO" id="GO:0015297">
    <property type="term" value="F:antiporter activity"/>
    <property type="evidence" value="ECO:0007669"/>
    <property type="project" value="UniProtKB-KW"/>
</dbReference>
<dbReference type="GO" id="GO:0006814">
    <property type="term" value="P:sodium ion transport"/>
    <property type="evidence" value="ECO:0007669"/>
    <property type="project" value="UniProtKB-KW"/>
</dbReference>
<dbReference type="InterPro" id="IPR004770">
    <property type="entry name" value="Na/H_antiport_NhaC"/>
</dbReference>
<dbReference type="InterPro" id="IPR018461">
    <property type="entry name" value="Na/H_Antiport_NhaC-like_C"/>
</dbReference>
<dbReference type="InterPro" id="IPR052180">
    <property type="entry name" value="NhaC_Na-H+_Antiporter"/>
</dbReference>
<dbReference type="NCBIfam" id="TIGR00931">
    <property type="entry name" value="antiport_nhaC"/>
    <property type="match status" value="1"/>
</dbReference>
<dbReference type="PANTHER" id="PTHR33451">
    <property type="entry name" value="MALATE-2H(+)/NA(+)-LACTATE ANTIPORTER"/>
    <property type="match status" value="1"/>
</dbReference>
<dbReference type="PANTHER" id="PTHR33451:SF6">
    <property type="entry name" value="NA(+)_H(+) ANTIPORTER NHAC"/>
    <property type="match status" value="1"/>
</dbReference>
<dbReference type="Pfam" id="PF03553">
    <property type="entry name" value="Na_H_antiporter"/>
    <property type="match status" value="1"/>
</dbReference>
<name>NHAC_ALKPO</name>
<proteinExistence type="inferred from homology"/>
<organism>
    <name type="scientific">Alkalihalophilus pseudofirmus (strain ATCC BAA-2126 / JCM 17055 / OF4)</name>
    <name type="common">Bacillus pseudofirmus</name>
    <dbReference type="NCBI Taxonomy" id="398511"/>
    <lineage>
        <taxon>Bacteria</taxon>
        <taxon>Bacillati</taxon>
        <taxon>Bacillota</taxon>
        <taxon>Bacilli</taxon>
        <taxon>Bacillales</taxon>
        <taxon>Bacillaceae</taxon>
        <taxon>Alkalihalophilus</taxon>
    </lineage>
</organism>
<gene>
    <name type="primary">nhaC</name>
    <name type="ordered locus">BpOF4_13965</name>
</gene>
<evidence type="ECO:0000255" key="1"/>
<evidence type="ECO:0000269" key="2">
    <source>
    </source>
</evidence>
<evidence type="ECO:0000269" key="3">
    <source>
    </source>
</evidence>
<evidence type="ECO:0000305" key="4"/>
<protein>
    <recommendedName>
        <fullName>Na(+)/H(+) antiporter NhaC</fullName>
    </recommendedName>
    <alternativeName>
        <fullName>Sodium/hydrogen antiporter</fullName>
    </alternativeName>
    <alternativeName>
        <fullName>Sodium/proton antiporter</fullName>
    </alternativeName>
</protein>